<protein>
    <recommendedName>
        <fullName evidence="1">4-hydroxy-tetrahydrodipicolinate reductase</fullName>
        <shortName evidence="1">HTPA reductase</shortName>
        <ecNumber evidence="1">1.17.1.8</ecNumber>
    </recommendedName>
</protein>
<feature type="chain" id="PRO_1000008597" description="4-hydroxy-tetrahydrodipicolinate reductase">
    <location>
        <begin position="1"/>
        <end position="245"/>
    </location>
</feature>
<feature type="active site" description="Proton donor/acceptor" evidence="1">
    <location>
        <position position="132"/>
    </location>
</feature>
<feature type="active site" description="Proton donor" evidence="1">
    <location>
        <position position="136"/>
    </location>
</feature>
<feature type="binding site" evidence="1">
    <location>
        <begin position="7"/>
        <end position="12"/>
    </location>
    <ligand>
        <name>NAD(+)</name>
        <dbReference type="ChEBI" id="CHEBI:57540"/>
    </ligand>
</feature>
<feature type="binding site" evidence="1">
    <location>
        <begin position="75"/>
        <end position="77"/>
    </location>
    <ligand>
        <name>NAD(+)</name>
        <dbReference type="ChEBI" id="CHEBI:57540"/>
    </ligand>
</feature>
<feature type="binding site" evidence="1">
    <location>
        <begin position="102"/>
        <end position="105"/>
    </location>
    <ligand>
        <name>NAD(+)</name>
        <dbReference type="ChEBI" id="CHEBI:57540"/>
    </ligand>
</feature>
<feature type="binding site" evidence="1">
    <location>
        <position position="133"/>
    </location>
    <ligand>
        <name>(S)-2,3,4,5-tetrahydrodipicolinate</name>
        <dbReference type="ChEBI" id="CHEBI:16845"/>
    </ligand>
</feature>
<feature type="binding site" evidence="1">
    <location>
        <begin position="142"/>
        <end position="143"/>
    </location>
    <ligand>
        <name>(S)-2,3,4,5-tetrahydrodipicolinate</name>
        <dbReference type="ChEBI" id="CHEBI:16845"/>
    </ligand>
</feature>
<gene>
    <name evidence="1" type="primary">dapB</name>
    <name type="ordered locus">MSMEG_2664</name>
    <name type="ordered locus">MSMEI_2600</name>
</gene>
<name>DAPB_MYCS2</name>
<keyword id="KW-0028">Amino-acid biosynthesis</keyword>
<keyword id="KW-0963">Cytoplasm</keyword>
<keyword id="KW-0220">Diaminopimelate biosynthesis</keyword>
<keyword id="KW-0457">Lysine biosynthesis</keyword>
<keyword id="KW-0520">NAD</keyword>
<keyword id="KW-0521">NADP</keyword>
<keyword id="KW-0560">Oxidoreductase</keyword>
<keyword id="KW-1185">Reference proteome</keyword>
<evidence type="ECO:0000255" key="1">
    <source>
        <dbReference type="HAMAP-Rule" id="MF_00102"/>
    </source>
</evidence>
<evidence type="ECO:0000305" key="2"/>
<comment type="function">
    <text evidence="1">Catalyzes the conversion of 4-hydroxy-tetrahydrodipicolinate (HTPA) to tetrahydrodipicolinate.</text>
</comment>
<comment type="catalytic activity">
    <reaction evidence="1">
        <text>(S)-2,3,4,5-tetrahydrodipicolinate + NAD(+) + H2O = (2S,4S)-4-hydroxy-2,3,4,5-tetrahydrodipicolinate + NADH + H(+)</text>
        <dbReference type="Rhea" id="RHEA:35323"/>
        <dbReference type="ChEBI" id="CHEBI:15377"/>
        <dbReference type="ChEBI" id="CHEBI:15378"/>
        <dbReference type="ChEBI" id="CHEBI:16845"/>
        <dbReference type="ChEBI" id="CHEBI:57540"/>
        <dbReference type="ChEBI" id="CHEBI:57945"/>
        <dbReference type="ChEBI" id="CHEBI:67139"/>
        <dbReference type="EC" id="1.17.1.8"/>
    </reaction>
</comment>
<comment type="catalytic activity">
    <reaction evidence="1">
        <text>(S)-2,3,4,5-tetrahydrodipicolinate + NADP(+) + H2O = (2S,4S)-4-hydroxy-2,3,4,5-tetrahydrodipicolinate + NADPH + H(+)</text>
        <dbReference type="Rhea" id="RHEA:35331"/>
        <dbReference type="ChEBI" id="CHEBI:15377"/>
        <dbReference type="ChEBI" id="CHEBI:15378"/>
        <dbReference type="ChEBI" id="CHEBI:16845"/>
        <dbReference type="ChEBI" id="CHEBI:57783"/>
        <dbReference type="ChEBI" id="CHEBI:58349"/>
        <dbReference type="ChEBI" id="CHEBI:67139"/>
        <dbReference type="EC" id="1.17.1.8"/>
    </reaction>
</comment>
<comment type="pathway">
    <text evidence="1">Amino-acid biosynthesis; L-lysine biosynthesis via DAP pathway; (S)-tetrahydrodipicolinate from L-aspartate: step 4/4.</text>
</comment>
<comment type="subcellular location">
    <subcellularLocation>
        <location evidence="1">Cytoplasm</location>
    </subcellularLocation>
</comment>
<comment type="similarity">
    <text evidence="1">Belongs to the DapB family.</text>
</comment>
<comment type="caution">
    <text evidence="2">Was originally thought to be a dihydrodipicolinate reductase (DHDPR), catalyzing the conversion of dihydrodipicolinate to tetrahydrodipicolinate. However, it was shown in E.coli that the substrate of the enzymatic reaction is not dihydrodipicolinate (DHDP) but in fact (2S,4S)-4-hydroxy-2,3,4,5-tetrahydrodipicolinic acid (HTPA), the product released by the DapA-catalyzed reaction.</text>
</comment>
<dbReference type="EC" id="1.17.1.8" evidence="1"/>
<dbReference type="EMBL" id="CP000480">
    <property type="protein sequence ID" value="ABK71521.1"/>
    <property type="molecule type" value="Genomic_DNA"/>
</dbReference>
<dbReference type="EMBL" id="CP001663">
    <property type="protein sequence ID" value="AFP39068.1"/>
    <property type="molecule type" value="Genomic_DNA"/>
</dbReference>
<dbReference type="RefSeq" id="WP_011728512.1">
    <property type="nucleotide sequence ID" value="NZ_SIJM01000074.1"/>
</dbReference>
<dbReference type="RefSeq" id="YP_887001.1">
    <property type="nucleotide sequence ID" value="NC_008596.1"/>
</dbReference>
<dbReference type="SMR" id="A0QVR3"/>
<dbReference type="STRING" id="246196.MSMEG_2664"/>
<dbReference type="PaxDb" id="246196-MSMEI_2600"/>
<dbReference type="GeneID" id="93457450"/>
<dbReference type="KEGG" id="msb:LJ00_13260"/>
<dbReference type="KEGG" id="msg:MSMEI_2600"/>
<dbReference type="KEGG" id="msm:MSMEG_2664"/>
<dbReference type="PATRIC" id="fig|246196.19.peg.2630"/>
<dbReference type="eggNOG" id="COG0289">
    <property type="taxonomic scope" value="Bacteria"/>
</dbReference>
<dbReference type="OrthoDB" id="9790352at2"/>
<dbReference type="UniPathway" id="UPA00034">
    <property type="reaction ID" value="UER00018"/>
</dbReference>
<dbReference type="Proteomes" id="UP000000757">
    <property type="component" value="Chromosome"/>
</dbReference>
<dbReference type="Proteomes" id="UP000006158">
    <property type="component" value="Chromosome"/>
</dbReference>
<dbReference type="GO" id="GO:0005829">
    <property type="term" value="C:cytosol"/>
    <property type="evidence" value="ECO:0007669"/>
    <property type="project" value="TreeGrafter"/>
</dbReference>
<dbReference type="GO" id="GO:0008839">
    <property type="term" value="F:4-hydroxy-tetrahydrodipicolinate reductase"/>
    <property type="evidence" value="ECO:0007669"/>
    <property type="project" value="UniProtKB-EC"/>
</dbReference>
<dbReference type="GO" id="GO:0051287">
    <property type="term" value="F:NAD binding"/>
    <property type="evidence" value="ECO:0007669"/>
    <property type="project" value="UniProtKB-UniRule"/>
</dbReference>
<dbReference type="GO" id="GO:0050661">
    <property type="term" value="F:NADP binding"/>
    <property type="evidence" value="ECO:0007669"/>
    <property type="project" value="UniProtKB-UniRule"/>
</dbReference>
<dbReference type="GO" id="GO:0016726">
    <property type="term" value="F:oxidoreductase activity, acting on CH or CH2 groups, NAD or NADP as acceptor"/>
    <property type="evidence" value="ECO:0007669"/>
    <property type="project" value="UniProtKB-UniRule"/>
</dbReference>
<dbReference type="GO" id="GO:0019877">
    <property type="term" value="P:diaminopimelate biosynthetic process"/>
    <property type="evidence" value="ECO:0007669"/>
    <property type="project" value="UniProtKB-UniRule"/>
</dbReference>
<dbReference type="GO" id="GO:0009089">
    <property type="term" value="P:lysine biosynthetic process via diaminopimelate"/>
    <property type="evidence" value="ECO:0007669"/>
    <property type="project" value="UniProtKB-UniRule"/>
</dbReference>
<dbReference type="CDD" id="cd02274">
    <property type="entry name" value="DHDPR_N"/>
    <property type="match status" value="1"/>
</dbReference>
<dbReference type="FunFam" id="3.30.360.10:FF:000009">
    <property type="entry name" value="4-hydroxy-tetrahydrodipicolinate reductase"/>
    <property type="match status" value="1"/>
</dbReference>
<dbReference type="Gene3D" id="3.30.360.10">
    <property type="entry name" value="Dihydrodipicolinate Reductase, domain 2"/>
    <property type="match status" value="1"/>
</dbReference>
<dbReference type="Gene3D" id="3.40.50.720">
    <property type="entry name" value="NAD(P)-binding Rossmann-like Domain"/>
    <property type="match status" value="1"/>
</dbReference>
<dbReference type="HAMAP" id="MF_00102">
    <property type="entry name" value="DapB"/>
    <property type="match status" value="1"/>
</dbReference>
<dbReference type="InterPro" id="IPR022663">
    <property type="entry name" value="DapB_C"/>
</dbReference>
<dbReference type="InterPro" id="IPR000846">
    <property type="entry name" value="DapB_N"/>
</dbReference>
<dbReference type="InterPro" id="IPR022664">
    <property type="entry name" value="DapB_N_CS"/>
</dbReference>
<dbReference type="InterPro" id="IPR023940">
    <property type="entry name" value="DHDPR_bac"/>
</dbReference>
<dbReference type="InterPro" id="IPR036291">
    <property type="entry name" value="NAD(P)-bd_dom_sf"/>
</dbReference>
<dbReference type="NCBIfam" id="TIGR00036">
    <property type="entry name" value="dapB"/>
    <property type="match status" value="1"/>
</dbReference>
<dbReference type="PANTHER" id="PTHR20836:SF0">
    <property type="entry name" value="4-HYDROXY-TETRAHYDRODIPICOLINATE REDUCTASE 1, CHLOROPLASTIC-RELATED"/>
    <property type="match status" value="1"/>
</dbReference>
<dbReference type="PANTHER" id="PTHR20836">
    <property type="entry name" value="DIHYDRODIPICOLINATE REDUCTASE"/>
    <property type="match status" value="1"/>
</dbReference>
<dbReference type="Pfam" id="PF05173">
    <property type="entry name" value="DapB_C"/>
    <property type="match status" value="1"/>
</dbReference>
<dbReference type="Pfam" id="PF01113">
    <property type="entry name" value="DapB_N"/>
    <property type="match status" value="1"/>
</dbReference>
<dbReference type="PIRSF" id="PIRSF000161">
    <property type="entry name" value="DHPR"/>
    <property type="match status" value="1"/>
</dbReference>
<dbReference type="SUPFAM" id="SSF55347">
    <property type="entry name" value="Glyceraldehyde-3-phosphate dehydrogenase-like, C-terminal domain"/>
    <property type="match status" value="1"/>
</dbReference>
<dbReference type="SUPFAM" id="SSF51735">
    <property type="entry name" value="NAD(P)-binding Rossmann-fold domains"/>
    <property type="match status" value="1"/>
</dbReference>
<dbReference type="PROSITE" id="PS01298">
    <property type="entry name" value="DAPB"/>
    <property type="match status" value="1"/>
</dbReference>
<reference key="1">
    <citation type="submission" date="2006-10" db="EMBL/GenBank/DDBJ databases">
        <authorList>
            <person name="Fleischmann R.D."/>
            <person name="Dodson R.J."/>
            <person name="Haft D.H."/>
            <person name="Merkel J.S."/>
            <person name="Nelson W.C."/>
            <person name="Fraser C.M."/>
        </authorList>
    </citation>
    <scope>NUCLEOTIDE SEQUENCE [LARGE SCALE GENOMIC DNA]</scope>
    <source>
        <strain>ATCC 700084 / mc(2)155</strain>
    </source>
</reference>
<reference key="2">
    <citation type="journal article" date="2007" name="Genome Biol.">
        <title>Interrupted coding sequences in Mycobacterium smegmatis: authentic mutations or sequencing errors?</title>
        <authorList>
            <person name="Deshayes C."/>
            <person name="Perrodou E."/>
            <person name="Gallien S."/>
            <person name="Euphrasie D."/>
            <person name="Schaeffer C."/>
            <person name="Van-Dorsselaer A."/>
            <person name="Poch O."/>
            <person name="Lecompte O."/>
            <person name="Reyrat J.-M."/>
        </authorList>
    </citation>
    <scope>NUCLEOTIDE SEQUENCE [LARGE SCALE GENOMIC DNA]</scope>
    <source>
        <strain>ATCC 700084 / mc(2)155</strain>
    </source>
</reference>
<reference key="3">
    <citation type="journal article" date="2009" name="Genome Res.">
        <title>Ortho-proteogenomics: multiple proteomes investigation through orthology and a new MS-based protocol.</title>
        <authorList>
            <person name="Gallien S."/>
            <person name="Perrodou E."/>
            <person name="Carapito C."/>
            <person name="Deshayes C."/>
            <person name="Reyrat J.-M."/>
            <person name="Van Dorsselaer A."/>
            <person name="Poch O."/>
            <person name="Schaeffer C."/>
            <person name="Lecompte O."/>
        </authorList>
    </citation>
    <scope>NUCLEOTIDE SEQUENCE [LARGE SCALE GENOMIC DNA]</scope>
    <scope>IDENTIFICATION BY MASS SPECTROMETRY [LARGE SCALE ANALYSIS]</scope>
    <source>
        <strain>ATCC 700084 / mc(2)155</strain>
    </source>
</reference>
<accession>A0QVR3</accession>
<accession>I7FJY8</accession>
<proteinExistence type="evidence at protein level"/>
<organism>
    <name type="scientific">Mycolicibacterium smegmatis (strain ATCC 700084 / mc(2)155)</name>
    <name type="common">Mycobacterium smegmatis</name>
    <dbReference type="NCBI Taxonomy" id="246196"/>
    <lineage>
        <taxon>Bacteria</taxon>
        <taxon>Bacillati</taxon>
        <taxon>Actinomycetota</taxon>
        <taxon>Actinomycetes</taxon>
        <taxon>Mycobacteriales</taxon>
        <taxon>Mycobacteriaceae</taxon>
        <taxon>Mycolicibacterium</taxon>
    </lineage>
</organism>
<sequence length="245" mass="25710">MRVGVLGARGKVGATMVAAVEAAEDLTFSAGVDAGDDLSLLTESKTEVVIDFTHPDVVMDNLKFVIDNGIHAVVGTTGFTWERIEQVEAWVKAKPGASVLIAPNFAIGAVLSMHFAKQAAKYFESVEIIELHHPHKADAPSGTAARTAKLIAEARKGLPPNPDATSTGLDGARGADVDGIPVHSVRLAGLVAHQEVLFGTQGETLTIRHDSLDRTSFVPGVLLAVRKISGLQGLTVGIEPLLDLS</sequence>